<comment type="function">
    <text evidence="1">Hydrolyzes ribosome-free peptidyl-tRNAs (with 1 or more amino acids incorporated), which drop off the ribosome during protein synthesis, or as a result of ribosome stalling.</text>
</comment>
<comment type="function">
    <text evidence="1">Catalyzes the release of premature peptidyl moieties from peptidyl-tRNA molecules trapped in stalled 50S ribosomal subunits, and thus maintains levels of free tRNAs and 50S ribosomes.</text>
</comment>
<comment type="catalytic activity">
    <reaction evidence="1">
        <text>an N-acyl-L-alpha-aminoacyl-tRNA + H2O = an N-acyl-L-amino acid + a tRNA + H(+)</text>
        <dbReference type="Rhea" id="RHEA:54448"/>
        <dbReference type="Rhea" id="RHEA-COMP:10123"/>
        <dbReference type="Rhea" id="RHEA-COMP:13883"/>
        <dbReference type="ChEBI" id="CHEBI:15377"/>
        <dbReference type="ChEBI" id="CHEBI:15378"/>
        <dbReference type="ChEBI" id="CHEBI:59874"/>
        <dbReference type="ChEBI" id="CHEBI:78442"/>
        <dbReference type="ChEBI" id="CHEBI:138191"/>
        <dbReference type="EC" id="3.1.1.29"/>
    </reaction>
</comment>
<comment type="subunit">
    <text evidence="1">Monomer.</text>
</comment>
<comment type="subcellular location">
    <subcellularLocation>
        <location evidence="1">Cytoplasm</location>
    </subcellularLocation>
</comment>
<comment type="similarity">
    <text evidence="1">Belongs to the PTH family.</text>
</comment>
<proteinExistence type="inferred from homology"/>
<accession>Q6ADQ8</accession>
<name>PTH_LEIXX</name>
<gene>
    <name evidence="1" type="primary">pth</name>
    <name type="ordered locus">Lxx17290</name>
</gene>
<organism>
    <name type="scientific">Leifsonia xyli subsp. xyli (strain CTCB07)</name>
    <dbReference type="NCBI Taxonomy" id="281090"/>
    <lineage>
        <taxon>Bacteria</taxon>
        <taxon>Bacillati</taxon>
        <taxon>Actinomycetota</taxon>
        <taxon>Actinomycetes</taxon>
        <taxon>Micrococcales</taxon>
        <taxon>Microbacteriaceae</taxon>
        <taxon>Leifsonia</taxon>
    </lineage>
</organism>
<reference key="1">
    <citation type="journal article" date="2004" name="Mol. Plant Microbe Interact.">
        <title>The genome sequence of the Gram-positive sugarcane pathogen Leifsonia xyli subsp. xyli.</title>
        <authorList>
            <person name="Monteiro-Vitorello C.B."/>
            <person name="Camargo L.E.A."/>
            <person name="Van Sluys M.A."/>
            <person name="Kitajima J.P."/>
            <person name="Truffi D."/>
            <person name="do Amaral A.M."/>
            <person name="Harakava R."/>
            <person name="de Oliveira J.C.F."/>
            <person name="Wood D."/>
            <person name="de Oliveira M.C."/>
            <person name="Miyaki C.Y."/>
            <person name="Takita M.A."/>
            <person name="da Silva A.C.R."/>
            <person name="Furlan L.R."/>
            <person name="Carraro D.M."/>
            <person name="Camarotte G."/>
            <person name="Almeida N.F. Jr."/>
            <person name="Carrer H."/>
            <person name="Coutinho L.L."/>
            <person name="El-Dorry H.A."/>
            <person name="Ferro M.I.T."/>
            <person name="Gagliardi P.R."/>
            <person name="Giglioti E."/>
            <person name="Goldman M.H.S."/>
            <person name="Goldman G.H."/>
            <person name="Kimura E.T."/>
            <person name="Ferro E.S."/>
            <person name="Kuramae E.E."/>
            <person name="Lemos E.G.M."/>
            <person name="Lemos M.V.F."/>
            <person name="Mauro S.M.Z."/>
            <person name="Machado M.A."/>
            <person name="Marino C.L."/>
            <person name="Menck C.F."/>
            <person name="Nunes L.R."/>
            <person name="Oliveira R.C."/>
            <person name="Pereira G.G."/>
            <person name="Siqueira W."/>
            <person name="de Souza A.A."/>
            <person name="Tsai S.M."/>
            <person name="Zanca A.S."/>
            <person name="Simpson A.J.G."/>
            <person name="Brumbley S.M."/>
            <person name="Setubal J.C."/>
        </authorList>
    </citation>
    <scope>NUCLEOTIDE SEQUENCE [LARGE SCALE GENOMIC DNA]</scope>
    <source>
        <strain>CTCB07</strain>
    </source>
</reference>
<sequence length="193" mass="20441">METLWLVVGLGNPGPGYAATRHNVGQLVLDELASRDRLSFKTHKTNATVAEGRIVPGGPRFVLAKPNTYMNGSGGPVSQLLRFYSLEPSRLIVVQDELDIPFDTLRLKFGGGHGGHNGVRDVIAEVGSGDFTRVRVGVGRPPGVQAAADHVLKGFSAAERKNLPILVADAADAVERIAAEGLTAAQNRFHTAG</sequence>
<keyword id="KW-0963">Cytoplasm</keyword>
<keyword id="KW-0378">Hydrolase</keyword>
<keyword id="KW-1185">Reference proteome</keyword>
<keyword id="KW-0694">RNA-binding</keyword>
<keyword id="KW-0820">tRNA-binding</keyword>
<protein>
    <recommendedName>
        <fullName evidence="1">Peptidyl-tRNA hydrolase</fullName>
        <shortName evidence="1">Pth</shortName>
        <ecNumber evidence="1">3.1.1.29</ecNumber>
    </recommendedName>
</protein>
<dbReference type="EC" id="3.1.1.29" evidence="1"/>
<dbReference type="EMBL" id="AE016822">
    <property type="protein sequence ID" value="AAT89488.1"/>
    <property type="molecule type" value="Genomic_DNA"/>
</dbReference>
<dbReference type="RefSeq" id="WP_011186476.1">
    <property type="nucleotide sequence ID" value="NC_006087.1"/>
</dbReference>
<dbReference type="SMR" id="Q6ADQ8"/>
<dbReference type="STRING" id="281090.Lxx17290"/>
<dbReference type="KEGG" id="lxx:Lxx17290"/>
<dbReference type="eggNOG" id="COG0193">
    <property type="taxonomic scope" value="Bacteria"/>
</dbReference>
<dbReference type="HOGENOM" id="CLU_062456_2_2_11"/>
<dbReference type="Proteomes" id="UP000001306">
    <property type="component" value="Chromosome"/>
</dbReference>
<dbReference type="GO" id="GO:0005737">
    <property type="term" value="C:cytoplasm"/>
    <property type="evidence" value="ECO:0007669"/>
    <property type="project" value="UniProtKB-SubCell"/>
</dbReference>
<dbReference type="GO" id="GO:0004045">
    <property type="term" value="F:peptidyl-tRNA hydrolase activity"/>
    <property type="evidence" value="ECO:0007669"/>
    <property type="project" value="UniProtKB-UniRule"/>
</dbReference>
<dbReference type="GO" id="GO:0000049">
    <property type="term" value="F:tRNA binding"/>
    <property type="evidence" value="ECO:0007669"/>
    <property type="project" value="UniProtKB-UniRule"/>
</dbReference>
<dbReference type="GO" id="GO:0006515">
    <property type="term" value="P:protein quality control for misfolded or incompletely synthesized proteins"/>
    <property type="evidence" value="ECO:0007669"/>
    <property type="project" value="UniProtKB-UniRule"/>
</dbReference>
<dbReference type="GO" id="GO:0072344">
    <property type="term" value="P:rescue of stalled ribosome"/>
    <property type="evidence" value="ECO:0007669"/>
    <property type="project" value="UniProtKB-UniRule"/>
</dbReference>
<dbReference type="CDD" id="cd00462">
    <property type="entry name" value="PTH"/>
    <property type="match status" value="1"/>
</dbReference>
<dbReference type="FunFam" id="3.40.50.1470:FF:000001">
    <property type="entry name" value="Peptidyl-tRNA hydrolase"/>
    <property type="match status" value="1"/>
</dbReference>
<dbReference type="Gene3D" id="3.40.50.1470">
    <property type="entry name" value="Peptidyl-tRNA hydrolase"/>
    <property type="match status" value="1"/>
</dbReference>
<dbReference type="HAMAP" id="MF_00083">
    <property type="entry name" value="Pept_tRNA_hydro_bact"/>
    <property type="match status" value="1"/>
</dbReference>
<dbReference type="InterPro" id="IPR001328">
    <property type="entry name" value="Pept_tRNA_hydro"/>
</dbReference>
<dbReference type="InterPro" id="IPR018171">
    <property type="entry name" value="Pept_tRNA_hydro_CS"/>
</dbReference>
<dbReference type="InterPro" id="IPR036416">
    <property type="entry name" value="Pept_tRNA_hydro_sf"/>
</dbReference>
<dbReference type="NCBIfam" id="TIGR00447">
    <property type="entry name" value="pth"/>
    <property type="match status" value="1"/>
</dbReference>
<dbReference type="PANTHER" id="PTHR17224">
    <property type="entry name" value="PEPTIDYL-TRNA HYDROLASE"/>
    <property type="match status" value="1"/>
</dbReference>
<dbReference type="PANTHER" id="PTHR17224:SF1">
    <property type="entry name" value="PEPTIDYL-TRNA HYDROLASE"/>
    <property type="match status" value="1"/>
</dbReference>
<dbReference type="Pfam" id="PF01195">
    <property type="entry name" value="Pept_tRNA_hydro"/>
    <property type="match status" value="1"/>
</dbReference>
<dbReference type="SUPFAM" id="SSF53178">
    <property type="entry name" value="Peptidyl-tRNA hydrolase-like"/>
    <property type="match status" value="1"/>
</dbReference>
<dbReference type="PROSITE" id="PS01195">
    <property type="entry name" value="PEPT_TRNA_HYDROL_1"/>
    <property type="match status" value="1"/>
</dbReference>
<dbReference type="PROSITE" id="PS01196">
    <property type="entry name" value="PEPT_TRNA_HYDROL_2"/>
    <property type="match status" value="1"/>
</dbReference>
<feature type="chain" id="PRO_0000187760" description="Peptidyl-tRNA hydrolase">
    <location>
        <begin position="1"/>
        <end position="193"/>
    </location>
</feature>
<feature type="active site" description="Proton acceptor" evidence="1">
    <location>
        <position position="22"/>
    </location>
</feature>
<feature type="binding site" evidence="1">
    <location>
        <position position="17"/>
    </location>
    <ligand>
        <name>tRNA</name>
        <dbReference type="ChEBI" id="CHEBI:17843"/>
    </ligand>
</feature>
<feature type="binding site" evidence="1">
    <location>
        <position position="69"/>
    </location>
    <ligand>
        <name>tRNA</name>
        <dbReference type="ChEBI" id="CHEBI:17843"/>
    </ligand>
</feature>
<feature type="binding site" evidence="1">
    <location>
        <position position="71"/>
    </location>
    <ligand>
        <name>tRNA</name>
        <dbReference type="ChEBI" id="CHEBI:17843"/>
    </ligand>
</feature>
<feature type="binding site" evidence="1">
    <location>
        <position position="117"/>
    </location>
    <ligand>
        <name>tRNA</name>
        <dbReference type="ChEBI" id="CHEBI:17843"/>
    </ligand>
</feature>
<feature type="site" description="Discriminates between blocked and unblocked aminoacyl-tRNA" evidence="1">
    <location>
        <position position="12"/>
    </location>
</feature>
<feature type="site" description="Stabilizes the basic form of H active site to accept a proton" evidence="1">
    <location>
        <position position="96"/>
    </location>
</feature>
<evidence type="ECO:0000255" key="1">
    <source>
        <dbReference type="HAMAP-Rule" id="MF_00083"/>
    </source>
</evidence>